<sequence length="1526" mass="157500">MNRTSPYYCRRSVLSLLISALIYAPPGMAAFTTNVIGVVNDETVDGNQKVDERGTTNNTHIINHGQQNVHGGVSNGSLIESGGYQDIGSHNNFVGQANNTTINGGRQSIHDGGISTGTTIESGNQDVYKGGISNGTTIKGGASRVEGGSANGILIDGGSQIVKVQGHADGTTINKSGSQDVVQGSLATNTTINGGRQYVEQSTVETTTIKNGGEQRVYESRALDTTIEGGTQSLNSKSTAKNTHIYSGGTQIVDNTSTSDVIEVYSGGVLDVRGGTATNVTQHDGAILKTNTNGTTVSGTNSEGAFSIHNHVADNVLLENGGHLDINAYGSANKTIIKDKGTMSVLTNAKADATRIDNGGVMDVAGNATNTIINGGTQNINNYGIATGTNINSGTQNIKSGGKADTTIISSGSRQVVEKDGTAIGSNISAGGSLIVYTGGIAHGVNQETGSALVANTGAGTDIEGYNKLSHFTITGGEANYVVLENTGELTVVAKTSAKNTTIDTGGKLIVQKEAKTDSTRLNNGGVLEVQDGGEAKHVEQQSGGALIASTTSGTLIEGTNSYGDAFYIRNSEAKNVVLENAGSLTVVTGSRAVDTIINANGKMDVYGKDVGTVLNSAGTQTIYASATSDKANIKGGKQTVYGLATEANIESGEQIVDGGSTEKTHINGGTQTVQNYGKAINTDIVSGLQQIMANGTAEGSIINGGSQVVNEGGLAENSVLNDGGTLDVREKGSATGIQQSSQGALVATTRATRVTGTRADGVAFSIEQGAANNILLANGGVLTVESDTSSDKTQVNMGGREIVKTKATATGTTLTGGEQIVEGVANETTINDGGIQTVSANGEAIKTKINEGGTLTVNDNGKATDIVQNSGAALQTSTANGIEISGTHQYGTFSISGNLATNMLLENGGNLLVLAGTEARDSTVGKGGAMQNLGQDSATKVNSGGQYTLGRSKDEFQALARAEDLQVAGGTAIVYAGTLADASVSGATGSLSLMTPRDNVTPVKLEGAVRITDSATLTLGNGVDTTLADLTAASRGSVWLNSNNSCAGTSNCEYRVNSLLLNDGDVYLSAQTAAPATTNGIYNTLTTNELSGSGNFYLHTNVAGSRGDQLVVNNNATGNFKIFVQDTGVSPQSDDAMTLVKTGGGDASFTLGNTGGFVDLGTYEYVLKSDGNSNWNLTNDVKPNPDPIPNPKPDPKPDPKPDPNPKPDPTPDPTPTPVPEKRITPSTAAVLNMAATLPLVFDAELNSIRERLNIMKASPHNNNVWGATYNTRNNVTTDAGAGFEQTLTGMTVGIDSRNDIPEGITTLGAFMGYSHSHIGFDRGGHGSVGSYSLGGYASWEHESGFYLDGVVKLNRFKSNVAGKMSSGGAANGSYHSNGLGGHIETGMRFTDGNWNLTPYASLTGFTADNPEYHLSNGMKSKSVDTRSIYRELGATLSYNMRLGNGMEVEPWLKAAVRKEFVDDNRVKVNSDGNFVNYLSGRRGIYQAGIKASFSSTLSGHLGVGYSHSAGVESPWNAVAGVNWSF</sequence>
<proteinExistence type="evidence at protein level"/>
<gene>
    <name type="primary">ypjA</name>
    <name type="ordered locus">b2647</name>
    <name type="ordered locus">JW5422</name>
</gene>
<accession>P52143</accession>
<accession>P76610</accession>
<accession>P77017</accession>
<accession>P77019</accession>
<reference key="1">
    <citation type="journal article" date="1997" name="DNA Res.">
        <title>Construction of a contiguous 874-kb sequence of the Escherichia coli-K12 genome corresponding to 50.0-68.8 min on the linkage map and analysis of its sequence features.</title>
        <authorList>
            <person name="Yamamoto Y."/>
            <person name="Aiba H."/>
            <person name="Baba T."/>
            <person name="Hayashi K."/>
            <person name="Inada T."/>
            <person name="Isono K."/>
            <person name="Itoh T."/>
            <person name="Kimura S."/>
            <person name="Kitagawa M."/>
            <person name="Makino K."/>
            <person name="Miki T."/>
            <person name="Mitsuhashi N."/>
            <person name="Mizobuchi K."/>
            <person name="Mori H."/>
            <person name="Nakade S."/>
            <person name="Nakamura Y."/>
            <person name="Nashimoto H."/>
            <person name="Oshima T."/>
            <person name="Oyama S."/>
            <person name="Saito N."/>
            <person name="Sampei G."/>
            <person name="Satoh Y."/>
            <person name="Sivasundaram S."/>
            <person name="Tagami H."/>
            <person name="Takahashi H."/>
            <person name="Takeda J."/>
            <person name="Takemoto K."/>
            <person name="Uehara K."/>
            <person name="Wada C."/>
            <person name="Yamagata S."/>
            <person name="Horiuchi T."/>
        </authorList>
    </citation>
    <scope>NUCLEOTIDE SEQUENCE [LARGE SCALE GENOMIC DNA]</scope>
    <source>
        <strain>K12 / W3110 / ATCC 27325 / DSM 5911</strain>
    </source>
</reference>
<reference key="2">
    <citation type="journal article" date="1997" name="Science">
        <title>The complete genome sequence of Escherichia coli K-12.</title>
        <authorList>
            <person name="Blattner F.R."/>
            <person name="Plunkett G. III"/>
            <person name="Bloch C.A."/>
            <person name="Perna N.T."/>
            <person name="Burland V."/>
            <person name="Riley M."/>
            <person name="Collado-Vides J."/>
            <person name="Glasner J.D."/>
            <person name="Rode C.K."/>
            <person name="Mayhew G.F."/>
            <person name="Gregor J."/>
            <person name="Davis N.W."/>
            <person name="Kirkpatrick H.A."/>
            <person name="Goeden M.A."/>
            <person name="Rose D.J."/>
            <person name="Mau B."/>
            <person name="Shao Y."/>
        </authorList>
    </citation>
    <scope>NUCLEOTIDE SEQUENCE [LARGE SCALE GENOMIC DNA]</scope>
    <source>
        <strain>K12 / MG1655 / ATCC 47076</strain>
    </source>
</reference>
<reference key="3">
    <citation type="journal article" date="2006" name="Mol. Syst. Biol.">
        <title>Highly accurate genome sequences of Escherichia coli K-12 strains MG1655 and W3110.</title>
        <authorList>
            <person name="Hayashi K."/>
            <person name="Morooka N."/>
            <person name="Yamamoto Y."/>
            <person name="Fujita K."/>
            <person name="Isono K."/>
            <person name="Choi S."/>
            <person name="Ohtsubo E."/>
            <person name="Baba T."/>
            <person name="Wanner B.L."/>
            <person name="Mori H."/>
            <person name="Horiuchi T."/>
        </authorList>
    </citation>
    <scope>NUCLEOTIDE SEQUENCE [LARGE SCALE GENOMIC DNA]</scope>
    <source>
        <strain>K12 / W3110 / ATCC 27325 / DSM 5911</strain>
    </source>
</reference>
<reference key="4">
    <citation type="journal article" date="2005" name="J. Bacteriol.">
        <title>Combined inactivation and expression strategy to study gene function under physiological conditions: application to identification of new Escherichia coli adhesins.</title>
        <authorList>
            <person name="Roux A."/>
            <person name="Beloin C."/>
            <person name="Ghigo J.M."/>
        </authorList>
    </citation>
    <scope>POSSIBLE FUNCTION IN ADHESION</scope>
    <scope>DISRUPTION PHENOTYPE</scope>
    <source>
        <strain>K12 / MG1655 / ATCC 47076</strain>
    </source>
</reference>
<feature type="signal peptide" evidence="1">
    <location>
        <begin position="1"/>
        <end position="29"/>
    </location>
</feature>
<feature type="chain" id="PRO_0000204733" description="Probable autotransporter YpjA">
    <location>
        <begin position="30"/>
        <end position="1526"/>
    </location>
</feature>
<feature type="domain" description="Autotransporter" evidence="2">
    <location>
        <begin position="1258"/>
        <end position="1526"/>
    </location>
</feature>
<feature type="region of interest" description="Disordered" evidence="3">
    <location>
        <begin position="1173"/>
        <end position="1223"/>
    </location>
</feature>
<feature type="compositionally biased region" description="Basic and acidic residues" evidence="3">
    <location>
        <begin position="1194"/>
        <end position="1206"/>
    </location>
</feature>
<feature type="compositionally biased region" description="Pro residues" evidence="3">
    <location>
        <begin position="1207"/>
        <end position="1219"/>
    </location>
</feature>
<protein>
    <recommendedName>
        <fullName evidence="5">Probable autotransporter YpjA</fullName>
    </recommendedName>
</protein>
<evidence type="ECO:0000255" key="1"/>
<evidence type="ECO:0000255" key="2">
    <source>
        <dbReference type="PROSITE-ProRule" id="PRU00556"/>
    </source>
</evidence>
<evidence type="ECO:0000256" key="3">
    <source>
        <dbReference type="SAM" id="MobiDB-lite"/>
    </source>
</evidence>
<evidence type="ECO:0000269" key="4">
    <source>
    </source>
</evidence>
<evidence type="ECO:0000305" key="5"/>
<keyword id="KW-0130">Cell adhesion</keyword>
<keyword id="KW-0998">Cell outer membrane</keyword>
<keyword id="KW-0472">Membrane</keyword>
<keyword id="KW-1185">Reference proteome</keyword>
<keyword id="KW-0732">Signal</keyword>
<keyword id="KW-0812">Transmembrane</keyword>
<keyword id="KW-1134">Transmembrane beta strand</keyword>
<dbReference type="EMBL" id="U36840">
    <property type="protein sequence ID" value="AAA79815.1"/>
    <property type="status" value="ALT_SEQ"/>
    <property type="molecule type" value="Genomic_DNA"/>
</dbReference>
<dbReference type="EMBL" id="U00096">
    <property type="protein sequence ID" value="AAC75695.2"/>
    <property type="molecule type" value="Genomic_DNA"/>
</dbReference>
<dbReference type="EMBL" id="AP009048">
    <property type="protein sequence ID" value="BAA16514.2"/>
    <property type="molecule type" value="Genomic_DNA"/>
</dbReference>
<dbReference type="PIR" id="A65044">
    <property type="entry name" value="A65044"/>
</dbReference>
<dbReference type="RefSeq" id="NP_417134.2">
    <property type="nucleotide sequence ID" value="NC_000913.3"/>
</dbReference>
<dbReference type="RefSeq" id="WP_010723187.1">
    <property type="nucleotide sequence ID" value="NZ_LN832404.1"/>
</dbReference>
<dbReference type="SMR" id="P52143"/>
<dbReference type="BioGRID" id="4259215">
    <property type="interactions" value="239"/>
</dbReference>
<dbReference type="DIP" id="DIP-12834N"/>
<dbReference type="FunCoup" id="P52143">
    <property type="interactions" value="88"/>
</dbReference>
<dbReference type="IntAct" id="P52143">
    <property type="interactions" value="2"/>
</dbReference>
<dbReference type="STRING" id="511145.b2647"/>
<dbReference type="PaxDb" id="511145-b2647"/>
<dbReference type="EnsemblBacteria" id="AAC75695">
    <property type="protein sequence ID" value="AAC75695"/>
    <property type="gene ID" value="b2647"/>
</dbReference>
<dbReference type="GeneID" id="948630"/>
<dbReference type="KEGG" id="ecj:JW5422"/>
<dbReference type="KEGG" id="eco:b2647"/>
<dbReference type="PATRIC" id="fig|1411691.4.peg.4091"/>
<dbReference type="EchoBASE" id="EB3005"/>
<dbReference type="eggNOG" id="COG3468">
    <property type="taxonomic scope" value="Bacteria"/>
</dbReference>
<dbReference type="HOGENOM" id="CLU_004643_1_0_6"/>
<dbReference type="InParanoid" id="P52143"/>
<dbReference type="OMA" id="KHQDYKK"/>
<dbReference type="OrthoDB" id="6477647at2"/>
<dbReference type="PhylomeDB" id="P52143"/>
<dbReference type="BioCyc" id="EcoCyc:G7382-MONOMER"/>
<dbReference type="PRO" id="PR:P52143"/>
<dbReference type="Proteomes" id="UP000000625">
    <property type="component" value="Chromosome"/>
</dbReference>
<dbReference type="GO" id="GO:0009279">
    <property type="term" value="C:cell outer membrane"/>
    <property type="evidence" value="ECO:0007669"/>
    <property type="project" value="UniProtKB-SubCell"/>
</dbReference>
<dbReference type="GO" id="GO:0007155">
    <property type="term" value="P:cell adhesion"/>
    <property type="evidence" value="ECO:0007669"/>
    <property type="project" value="UniProtKB-KW"/>
</dbReference>
<dbReference type="CDD" id="cd01343">
    <property type="entry name" value="PL1_Passenger_AT"/>
    <property type="match status" value="1"/>
</dbReference>
<dbReference type="Gene3D" id="2.160.20.20">
    <property type="match status" value="4"/>
</dbReference>
<dbReference type="Gene3D" id="2.40.128.130">
    <property type="entry name" value="Autotransporter beta-domain"/>
    <property type="match status" value="1"/>
</dbReference>
<dbReference type="InterPro" id="IPR030930">
    <property type="entry name" value="AIDA"/>
</dbReference>
<dbReference type="InterPro" id="IPR005546">
    <property type="entry name" value="Autotransporte_beta"/>
</dbReference>
<dbReference type="InterPro" id="IPR036709">
    <property type="entry name" value="Autotransporte_beta_dom_sf"/>
</dbReference>
<dbReference type="InterPro" id="IPR012332">
    <property type="entry name" value="Autotransporter_pectin_lyase_C"/>
</dbReference>
<dbReference type="InterPro" id="IPR050909">
    <property type="entry name" value="Bact_Autotransporter_VF"/>
</dbReference>
<dbReference type="InterPro" id="IPR006315">
    <property type="entry name" value="OM_autotransptr_brl_dom"/>
</dbReference>
<dbReference type="InterPro" id="IPR011050">
    <property type="entry name" value="Pectin_lyase_fold/virulence"/>
</dbReference>
<dbReference type="InterPro" id="IPR004899">
    <property type="entry name" value="Pertactin_central"/>
</dbReference>
<dbReference type="InterPro" id="IPR003991">
    <property type="entry name" value="Pertactin_virulence_factor"/>
</dbReference>
<dbReference type="NCBIfam" id="TIGR01414">
    <property type="entry name" value="autotrans_barl"/>
    <property type="match status" value="1"/>
</dbReference>
<dbReference type="NCBIfam" id="TIGR04415">
    <property type="entry name" value="O_hepto_targRPT"/>
    <property type="match status" value="6"/>
</dbReference>
<dbReference type="PANTHER" id="PTHR12338:SF5">
    <property type="entry name" value="ANTIGEN 43-RELATED"/>
    <property type="match status" value="1"/>
</dbReference>
<dbReference type="PANTHER" id="PTHR12338">
    <property type="entry name" value="AUTOTRANSPORTER"/>
    <property type="match status" value="1"/>
</dbReference>
<dbReference type="Pfam" id="PF16168">
    <property type="entry name" value="AIDA"/>
    <property type="match status" value="6"/>
</dbReference>
<dbReference type="Pfam" id="PF03797">
    <property type="entry name" value="Autotransporter"/>
    <property type="match status" value="1"/>
</dbReference>
<dbReference type="Pfam" id="PF03212">
    <property type="entry name" value="Pertactin"/>
    <property type="match status" value="1"/>
</dbReference>
<dbReference type="PRINTS" id="PR01484">
    <property type="entry name" value="PRTACTNFAMLY"/>
</dbReference>
<dbReference type="SMART" id="SM00869">
    <property type="entry name" value="Autotransporter"/>
    <property type="match status" value="1"/>
</dbReference>
<dbReference type="SUPFAM" id="SSF103515">
    <property type="entry name" value="Autotransporter"/>
    <property type="match status" value="1"/>
</dbReference>
<dbReference type="SUPFAM" id="SSF51126">
    <property type="entry name" value="Pectin lyase-like"/>
    <property type="match status" value="1"/>
</dbReference>
<dbReference type="PROSITE" id="PS51208">
    <property type="entry name" value="AUTOTRANSPORTER"/>
    <property type="match status" value="1"/>
</dbReference>
<organism>
    <name type="scientific">Escherichia coli (strain K12)</name>
    <dbReference type="NCBI Taxonomy" id="83333"/>
    <lineage>
        <taxon>Bacteria</taxon>
        <taxon>Pseudomonadati</taxon>
        <taxon>Pseudomonadota</taxon>
        <taxon>Gammaproteobacteria</taxon>
        <taxon>Enterobacterales</taxon>
        <taxon>Enterobacteriaceae</taxon>
        <taxon>Escherichia</taxon>
    </lineage>
</organism>
<comment type="function">
    <text evidence="4">Upon overexpression shows increased adherence to polyvinyl chloride (PVC) plates, increased mature biofilm formation (PubMed:15659678).</text>
</comment>
<comment type="subcellular location">
    <subcellularLocation>
        <location evidence="5">Cell outer membrane</location>
        <topology evidence="5">Peripheral membrane protein</topology>
    </subcellularLocation>
</comment>
<comment type="disruption phenotype">
    <text evidence="4">No change in cell adhesion or biofilm formation (PubMed:15659678).</text>
</comment>
<name>YPJA_ECOLI</name>